<evidence type="ECO:0000255" key="1">
    <source>
        <dbReference type="HAMAP-Rule" id="MF_00004"/>
    </source>
</evidence>
<keyword id="KW-0963">Cytoplasm</keyword>
<keyword id="KW-0328">Glycosyltransferase</keyword>
<keyword id="KW-0660">Purine salvage</keyword>
<keyword id="KW-0808">Transferase</keyword>
<comment type="function">
    <text evidence="1">Catalyzes a salvage reaction resulting in the formation of AMP, that is energically less costly than de novo synthesis.</text>
</comment>
<comment type="catalytic activity">
    <reaction evidence="1">
        <text>AMP + diphosphate = 5-phospho-alpha-D-ribose 1-diphosphate + adenine</text>
        <dbReference type="Rhea" id="RHEA:16609"/>
        <dbReference type="ChEBI" id="CHEBI:16708"/>
        <dbReference type="ChEBI" id="CHEBI:33019"/>
        <dbReference type="ChEBI" id="CHEBI:58017"/>
        <dbReference type="ChEBI" id="CHEBI:456215"/>
        <dbReference type="EC" id="2.4.2.7"/>
    </reaction>
</comment>
<comment type="pathway">
    <text evidence="1">Purine metabolism; AMP biosynthesis via salvage pathway; AMP from adenine: step 1/1.</text>
</comment>
<comment type="subunit">
    <text evidence="1">Homodimer.</text>
</comment>
<comment type="subcellular location">
    <subcellularLocation>
        <location evidence="1">Cytoplasm</location>
    </subcellularLocation>
</comment>
<comment type="similarity">
    <text evidence="1">Belongs to the purine/pyrimidine phosphoribosyltransferase family.</text>
</comment>
<proteinExistence type="inferred from homology"/>
<accession>Q04NG3</accession>
<reference key="1">
    <citation type="journal article" date="2006" name="Proc. Natl. Acad. Sci. U.S.A.">
        <title>Genome reduction in Leptospira borgpetersenii reflects limited transmission potential.</title>
        <authorList>
            <person name="Bulach D.M."/>
            <person name="Zuerner R.L."/>
            <person name="Wilson P."/>
            <person name="Seemann T."/>
            <person name="McGrath A."/>
            <person name="Cullen P.A."/>
            <person name="Davis J."/>
            <person name="Johnson M."/>
            <person name="Kuczek E."/>
            <person name="Alt D.P."/>
            <person name="Peterson-Burch B."/>
            <person name="Coppel R.L."/>
            <person name="Rood J.I."/>
            <person name="Davies J.K."/>
            <person name="Adler B."/>
        </authorList>
    </citation>
    <scope>NUCLEOTIDE SEQUENCE [LARGE SCALE GENOMIC DNA]</scope>
    <source>
        <strain>JB197</strain>
    </source>
</reference>
<organism>
    <name type="scientific">Leptospira borgpetersenii serovar Hardjo-bovis (strain JB197)</name>
    <dbReference type="NCBI Taxonomy" id="355277"/>
    <lineage>
        <taxon>Bacteria</taxon>
        <taxon>Pseudomonadati</taxon>
        <taxon>Spirochaetota</taxon>
        <taxon>Spirochaetia</taxon>
        <taxon>Leptospirales</taxon>
        <taxon>Leptospiraceae</taxon>
        <taxon>Leptospira</taxon>
    </lineage>
</organism>
<feature type="chain" id="PRO_1000000300" description="Adenine phosphoribosyltransferase">
    <location>
        <begin position="1"/>
        <end position="177"/>
    </location>
</feature>
<protein>
    <recommendedName>
        <fullName evidence="1">Adenine phosphoribosyltransferase</fullName>
        <shortName evidence="1">APRT</shortName>
        <ecNumber evidence="1">2.4.2.7</ecNumber>
    </recommendedName>
</protein>
<dbReference type="EC" id="2.4.2.7" evidence="1"/>
<dbReference type="EMBL" id="CP000351">
    <property type="protein sequence ID" value="ABJ77557.1"/>
    <property type="molecule type" value="Genomic_DNA"/>
</dbReference>
<dbReference type="RefSeq" id="WP_011671361.1">
    <property type="nucleotide sequence ID" value="NC_008511.1"/>
</dbReference>
<dbReference type="SMR" id="Q04NG3"/>
<dbReference type="KEGG" id="lbj:LBJ_4170"/>
<dbReference type="HOGENOM" id="CLU_063339_3_0_12"/>
<dbReference type="UniPathway" id="UPA00588">
    <property type="reaction ID" value="UER00646"/>
</dbReference>
<dbReference type="Proteomes" id="UP000000656">
    <property type="component" value="Chromosome 2"/>
</dbReference>
<dbReference type="GO" id="GO:0005737">
    <property type="term" value="C:cytoplasm"/>
    <property type="evidence" value="ECO:0007669"/>
    <property type="project" value="UniProtKB-SubCell"/>
</dbReference>
<dbReference type="GO" id="GO:0003999">
    <property type="term" value="F:adenine phosphoribosyltransferase activity"/>
    <property type="evidence" value="ECO:0007669"/>
    <property type="project" value="UniProtKB-UniRule"/>
</dbReference>
<dbReference type="GO" id="GO:0006168">
    <property type="term" value="P:adenine salvage"/>
    <property type="evidence" value="ECO:0007669"/>
    <property type="project" value="InterPro"/>
</dbReference>
<dbReference type="GO" id="GO:0044209">
    <property type="term" value="P:AMP salvage"/>
    <property type="evidence" value="ECO:0007669"/>
    <property type="project" value="UniProtKB-UniRule"/>
</dbReference>
<dbReference type="GO" id="GO:0006166">
    <property type="term" value="P:purine ribonucleoside salvage"/>
    <property type="evidence" value="ECO:0007669"/>
    <property type="project" value="UniProtKB-KW"/>
</dbReference>
<dbReference type="CDD" id="cd06223">
    <property type="entry name" value="PRTases_typeI"/>
    <property type="match status" value="1"/>
</dbReference>
<dbReference type="FunFam" id="3.40.50.2020:FF:000004">
    <property type="entry name" value="Adenine phosphoribosyltransferase"/>
    <property type="match status" value="1"/>
</dbReference>
<dbReference type="Gene3D" id="3.40.50.2020">
    <property type="match status" value="1"/>
</dbReference>
<dbReference type="HAMAP" id="MF_00004">
    <property type="entry name" value="Aden_phosphoribosyltr"/>
    <property type="match status" value="1"/>
</dbReference>
<dbReference type="InterPro" id="IPR005764">
    <property type="entry name" value="Ade_phspho_trans"/>
</dbReference>
<dbReference type="InterPro" id="IPR050120">
    <property type="entry name" value="Adenine_PRTase"/>
</dbReference>
<dbReference type="InterPro" id="IPR000836">
    <property type="entry name" value="PRibTrfase_dom"/>
</dbReference>
<dbReference type="InterPro" id="IPR029057">
    <property type="entry name" value="PRTase-like"/>
</dbReference>
<dbReference type="NCBIfam" id="TIGR01090">
    <property type="entry name" value="apt"/>
    <property type="match status" value="1"/>
</dbReference>
<dbReference type="NCBIfam" id="NF002632">
    <property type="entry name" value="PRK02304.1-1"/>
    <property type="match status" value="1"/>
</dbReference>
<dbReference type="NCBIfam" id="NF002634">
    <property type="entry name" value="PRK02304.1-3"/>
    <property type="match status" value="1"/>
</dbReference>
<dbReference type="NCBIfam" id="NF002636">
    <property type="entry name" value="PRK02304.1-5"/>
    <property type="match status" value="1"/>
</dbReference>
<dbReference type="PANTHER" id="PTHR11776">
    <property type="entry name" value="ADENINE PHOSPHORIBOSYLTRANSFERASE"/>
    <property type="match status" value="1"/>
</dbReference>
<dbReference type="PANTHER" id="PTHR11776:SF7">
    <property type="entry name" value="PHOSPHORIBOSYLTRANSFERASE DOMAIN-CONTAINING PROTEIN"/>
    <property type="match status" value="1"/>
</dbReference>
<dbReference type="Pfam" id="PF00156">
    <property type="entry name" value="Pribosyltran"/>
    <property type="match status" value="1"/>
</dbReference>
<dbReference type="SUPFAM" id="SSF53271">
    <property type="entry name" value="PRTase-like"/>
    <property type="match status" value="1"/>
</dbReference>
<dbReference type="PROSITE" id="PS00103">
    <property type="entry name" value="PUR_PYR_PR_TRANSFER"/>
    <property type="match status" value="1"/>
</dbReference>
<sequence length="177" mass="19222">MSIVKSKIRTIPDYPKPGILFRDITSLLLDPEGLALTIGTFVNRYQDKGITKVAGIEARGFLTGAPLAFQLGVGFIPIRKKGKLPAETVSEEYDLEYGKDVIEIHKDAVQPGDKILLMDDLIATGGTMIAAVKLLKKLGAQIYEAGVIIDLPDLGGSKKLQEKLEVPVFAICEFEGH</sequence>
<gene>
    <name evidence="1" type="primary">apt</name>
    <name type="ordered locus">LBJ_4170</name>
</gene>
<name>APT_LEPBJ</name>